<reference key="1">
    <citation type="journal article" date="1986" name="J. Gen. Virol.">
        <title>The complete DNA sequence of varicella-zoster virus.</title>
        <authorList>
            <person name="Davison A.J."/>
            <person name="Scott J.E."/>
        </authorList>
    </citation>
    <scope>NUCLEOTIDE SEQUENCE [LARGE SCALE GENOMIC DNA]</scope>
</reference>
<reference key="2">
    <citation type="journal article" date="2003" name="J. Med. Virol.">
        <title>Identification of the authentic varicella-zoster virus gB (gene 31) initiating methionine overlapping the 3' end of gene 30.</title>
        <authorList>
            <person name="Maresova L."/>
            <person name="Pasieka T.J."/>
            <person name="Wagenaar T."/>
            <person name="Jackson W."/>
            <person name="Grose C."/>
        </authorList>
    </citation>
    <scope>IDENTIFICATION OF START CODON</scope>
    <scope>INTERACTION WITH GLYCOPROTEIN E</scope>
    <source>
        <strain>VZV 80-2</strain>
    </source>
</reference>
<reference key="3">
    <citation type="journal article" date="2005" name="J. Virol.">
        <title>Incorporation of three endocytosed varicella-zoster virus glycoproteins, gE, gH, and gB, into the virion envelope.</title>
        <authorList>
            <person name="Maresova L."/>
            <person name="Pasieka T.J."/>
            <person name="Homan E."/>
            <person name="Gerday E."/>
            <person name="Grose C."/>
        </authorList>
    </citation>
    <scope>SUBCELLULAR LOCATION</scope>
    <scope>INTERNALIZATION MOTIF</scope>
    <source>
        <strain>VZV-32</strain>
    </source>
</reference>
<proteinExistence type="evidence at protein level"/>
<sequence length="931" mass="105347">MSPCGYYSKWRNRDRPEYRRNLRFRRFFSSIHPNAAAGSGFNGPGVFITSVTGVWLCFLCIFSMFVTAVVSVSPSSFYESLQVEPTQSEDITRSAHLGDGDEIREAIHKSQDAETKPTFYVCPPPTGSTIVRLEPTRTCPDYHLGKNFTEGIAVVYKENIAAYKFKATVYYKDVIVSTAWAGSSYTQITNRYADRVPIPVSEITDTIDKFGKCSSKATYVRNNHKVEAFNEDKNPQDMPLIASKYNSVGSKAWHTTNDTYMVAGTPGTYRTGTSVNCIIEEVEARSIFPYDSFGLSTGDIIYMSPFFGLRDGAYREHSNYAMDRFHQFEGYRQRDLDTRALLEPAARNFLVTPHLTVGWNWKPKRTEVCSLVKWREVEDVVRDEYAHNFRFTMKTLSTTFISETNEFNLNQIHLSQCVKEEARAIINRIYTTRYNSSHVRTGDIQTYLARGGFVVVFQPLLSNSLARLYLQELVRENTNHSPQKHPTRNTRSRRSVPVELRANRTITTTSSVEFAMLQFTYDHIQEHVNEMLARISSSWCQLQNRERALWSGLFPINPSALASTILDQRVKARILGDVISVSNCPELGSDTRIILQNSMRVSGSTTRCYSRPLISIVSLNGSGTVEGQLGTDNELIMSRDLLEPCVANHKRYFLFGHHYVYYEDYRYVREIAVHDVGMISTYVDLNLTLLKDREFMPLQVYTRDELRDTGLLDYSEIQRRNQMHSLRFYDIDKVVQYDSGTAIMQGMAQFFQGLGTAGQAVGHVVLGATGALLSTVHGFTTFLSNPFGALAVGLLVLAGLVAAFFAYRYVLKLKTSPMKALYPLTTKGLKQLPEGMDPFAEKPNATDTPIEEIGDSQNTEPSVNSGFDPDKFREAQEMIKYMTLVSAAERQESKARKKNKTSALLTSRLTGLALRNRRGYSRVRTENVTGV</sequence>
<dbReference type="EMBL" id="X04370">
    <property type="protein sequence ID" value="CAA27914.1"/>
    <property type="status" value="ALT_INIT"/>
    <property type="molecule type" value="Genomic_DNA"/>
</dbReference>
<dbReference type="PIR" id="E27214">
    <property type="entry name" value="VGBE31"/>
</dbReference>
<dbReference type="PDB" id="6VN1">
    <property type="method" value="EM"/>
    <property type="resolution" value="2.80 A"/>
    <property type="chains" value="A/B/C=1-931"/>
</dbReference>
<dbReference type="PDBsum" id="6VN1"/>
<dbReference type="SMR" id="P09257"/>
<dbReference type="GlyCosmos" id="P09257">
    <property type="glycosylation" value="6 sites, No reported glycans"/>
</dbReference>
<dbReference type="ABCD" id="P09257">
    <property type="antibodies" value="1 sequenced antibody"/>
</dbReference>
<dbReference type="Proteomes" id="UP000002602">
    <property type="component" value="Genome"/>
</dbReference>
<dbReference type="GO" id="GO:0044175">
    <property type="term" value="C:host cell endosome membrane"/>
    <property type="evidence" value="ECO:0007669"/>
    <property type="project" value="UniProtKB-SubCell"/>
</dbReference>
<dbReference type="GO" id="GO:0044178">
    <property type="term" value="C:host cell Golgi membrane"/>
    <property type="evidence" value="ECO:0007669"/>
    <property type="project" value="UniProtKB-SubCell"/>
</dbReference>
<dbReference type="GO" id="GO:0020002">
    <property type="term" value="C:host cell plasma membrane"/>
    <property type="evidence" value="ECO:0007669"/>
    <property type="project" value="UniProtKB-SubCell"/>
</dbReference>
<dbReference type="GO" id="GO:0016020">
    <property type="term" value="C:membrane"/>
    <property type="evidence" value="ECO:0007669"/>
    <property type="project" value="UniProtKB-KW"/>
</dbReference>
<dbReference type="GO" id="GO:0019031">
    <property type="term" value="C:viral envelope"/>
    <property type="evidence" value="ECO:0007669"/>
    <property type="project" value="UniProtKB-KW"/>
</dbReference>
<dbReference type="GO" id="GO:0055036">
    <property type="term" value="C:virion membrane"/>
    <property type="evidence" value="ECO:0007669"/>
    <property type="project" value="UniProtKB-SubCell"/>
</dbReference>
<dbReference type="GO" id="GO:0046718">
    <property type="term" value="P:symbiont entry into host cell"/>
    <property type="evidence" value="ECO:0007669"/>
    <property type="project" value="UniProtKB-KW"/>
</dbReference>
<dbReference type="GO" id="GO:0019062">
    <property type="term" value="P:virion attachment to host cell"/>
    <property type="evidence" value="ECO:0007669"/>
    <property type="project" value="UniProtKB-KW"/>
</dbReference>
<dbReference type="Gene3D" id="1.20.5.1890">
    <property type="match status" value="1"/>
</dbReference>
<dbReference type="Gene3D" id="2.30.29.100">
    <property type="match status" value="1"/>
</dbReference>
<dbReference type="Gene3D" id="2.30.30.1230">
    <property type="match status" value="1"/>
</dbReference>
<dbReference type="Gene3D" id="6.10.250.3280">
    <property type="match status" value="1"/>
</dbReference>
<dbReference type="HAMAP" id="MF_04032">
    <property type="entry name" value="HSV_GB"/>
    <property type="match status" value="1"/>
</dbReference>
<dbReference type="InterPro" id="IPR035377">
    <property type="entry name" value="Glycoprot_B_PH1"/>
</dbReference>
<dbReference type="InterPro" id="IPR035381">
    <property type="entry name" value="Glycoprot_B_PH2"/>
</dbReference>
<dbReference type="InterPro" id="IPR038631">
    <property type="entry name" value="Glycoprot_B_PH2_sf"/>
</dbReference>
<dbReference type="InterPro" id="IPR055341">
    <property type="entry name" value="Glycoprotein_B_ecto_C"/>
</dbReference>
<dbReference type="InterPro" id="IPR000234">
    <property type="entry name" value="Herpes_Glycoprot_B"/>
</dbReference>
<dbReference type="Pfam" id="PF17416">
    <property type="entry name" value="Glycoprot_B_PH1"/>
    <property type="match status" value="1"/>
</dbReference>
<dbReference type="Pfam" id="PF17417">
    <property type="entry name" value="Glycoprot_B_PH2"/>
    <property type="match status" value="1"/>
</dbReference>
<dbReference type="Pfam" id="PF00606">
    <property type="entry name" value="Glycoprotein_B"/>
    <property type="match status" value="1"/>
</dbReference>
<dbReference type="SUPFAM" id="SSF161008">
    <property type="entry name" value="Viral glycoprotein ectodomain-like"/>
    <property type="match status" value="1"/>
</dbReference>
<dbReference type="PROSITE" id="PS00430">
    <property type="entry name" value="TONB_DEPENDENT_REC_1"/>
    <property type="match status" value="1"/>
</dbReference>
<name>GB_VZVD</name>
<organism>
    <name type="scientific">Varicella-zoster virus (strain Dumas)</name>
    <name type="common">HHV-3</name>
    <name type="synonym">Human herpesvirus 3</name>
    <dbReference type="NCBI Taxonomy" id="10338"/>
    <lineage>
        <taxon>Viruses</taxon>
        <taxon>Duplodnaviria</taxon>
        <taxon>Heunggongvirae</taxon>
        <taxon>Peploviricota</taxon>
        <taxon>Herviviricetes</taxon>
        <taxon>Herpesvirales</taxon>
        <taxon>Orthoherpesviridae</taxon>
        <taxon>Alphaherpesvirinae</taxon>
        <taxon>Varicellovirus</taxon>
        <taxon>Varicellovirus humanalpha3</taxon>
        <taxon>Human herpesvirus 3</taxon>
    </lineage>
</organism>
<keyword id="KW-0002">3D-structure</keyword>
<keyword id="KW-1015">Disulfide bond</keyword>
<keyword id="KW-0325">Glycoprotein</keyword>
<keyword id="KW-1032">Host cell membrane</keyword>
<keyword id="KW-1039">Host endosome</keyword>
<keyword id="KW-1040">Host Golgi apparatus</keyword>
<keyword id="KW-1043">Host membrane</keyword>
<keyword id="KW-0945">Host-virus interaction</keyword>
<keyword id="KW-0472">Membrane</keyword>
<keyword id="KW-1185">Reference proteome</keyword>
<keyword id="KW-0732">Signal</keyword>
<keyword id="KW-0812">Transmembrane</keyword>
<keyword id="KW-1133">Transmembrane helix</keyword>
<keyword id="KW-1161">Viral attachment to host cell</keyword>
<keyword id="KW-0261">Viral envelope protein</keyword>
<keyword id="KW-0946">Virion</keyword>
<keyword id="KW-1160">Virus entry into host cell</keyword>
<feature type="signal peptide" evidence="1">
    <location>
        <begin position="1"/>
        <end position="71"/>
    </location>
</feature>
<feature type="chain" id="PRO_0000038189" description="Envelope glycoprotein B">
    <location>
        <begin position="72"/>
        <end position="931"/>
    </location>
</feature>
<feature type="topological domain" description="Virion surface" evidence="2">
    <location>
        <begin position="72"/>
        <end position="786"/>
    </location>
</feature>
<feature type="transmembrane region" description="Helical" evidence="2">
    <location>
        <begin position="787"/>
        <end position="807"/>
    </location>
</feature>
<feature type="topological domain" description="Intravirion" evidence="2">
    <location>
        <begin position="808"/>
        <end position="931"/>
    </location>
</feature>
<feature type="region of interest" description="Involved in fusion and/or binding to host membrane" evidence="2">
    <location>
        <begin position="179"/>
        <end position="185"/>
    </location>
</feature>
<feature type="region of interest" description="Involved in fusion and/or binding to host membrane" evidence="2">
    <location>
        <begin position="264"/>
        <end position="271"/>
    </location>
</feature>
<feature type="region of interest" description="Hydrophobic membrane proximal region" evidence="2">
    <location>
        <begin position="731"/>
        <end position="784"/>
    </location>
</feature>
<feature type="region of interest" description="Hydrophobic membrane proximal region">
    <location>
        <begin position="764"/>
        <end position="784"/>
    </location>
</feature>
<feature type="short sequence motif" description="Golgi targeting" evidence="2">
    <location>
        <begin position="881"/>
        <end position="884"/>
    </location>
</feature>
<feature type="short sequence motif" description="Di-leucine internalization motif" evidence="1">
    <location>
        <begin position="904"/>
        <end position="906"/>
    </location>
</feature>
<feature type="short sequence motif" description="Internalization motif" evidence="2">
    <location>
        <begin position="920"/>
        <end position="923"/>
    </location>
</feature>
<feature type="site" description="Cleavage; by host furin" evidence="1">
    <location>
        <begin position="494"/>
        <end position="495"/>
    </location>
</feature>
<feature type="glycosylation site" description="N-linked (GlcNAc...) asparagine; by host" evidence="2">
    <location>
        <position position="147"/>
    </location>
</feature>
<feature type="glycosylation site" description="N-linked (GlcNAc...) asparagine; by host" evidence="2">
    <location>
        <position position="257"/>
    </location>
</feature>
<feature type="glycosylation site" description="N-linked (GlcNAc...) asparagine; by host" evidence="2">
    <location>
        <position position="435"/>
    </location>
</feature>
<feature type="glycosylation site" description="N-linked (GlcNAc...) asparagine; by host" evidence="2">
    <location>
        <position position="503"/>
    </location>
</feature>
<feature type="glycosylation site" description="N-linked (GlcNAc...) asparagine; by host" evidence="2">
    <location>
        <position position="620"/>
    </location>
</feature>
<feature type="glycosylation site" description="N-linked (GlcNAc...) asparagine; by host" evidence="2">
    <location>
        <position position="686"/>
    </location>
</feature>
<feature type="disulfide bond" evidence="2">
    <location>
        <begin position="122"/>
        <end position="584"/>
    </location>
</feature>
<feature type="disulfide bond" evidence="2">
    <location>
        <begin position="139"/>
        <end position="540"/>
    </location>
</feature>
<feature type="disulfide bond" evidence="2">
    <location>
        <begin position="213"/>
        <end position="277"/>
    </location>
</feature>
<feature type="disulfide bond" evidence="2">
    <location>
        <begin position="369"/>
        <end position="417"/>
    </location>
</feature>
<feature type="disulfide bond" evidence="2">
    <location>
        <begin position="608"/>
        <end position="645"/>
    </location>
</feature>
<feature type="strand" evidence="5">
    <location>
        <begin position="129"/>
        <end position="133"/>
    </location>
</feature>
<feature type="strand" evidence="5">
    <location>
        <begin position="150"/>
        <end position="158"/>
    </location>
</feature>
<feature type="strand" evidence="5">
    <location>
        <begin position="163"/>
        <end position="181"/>
    </location>
</feature>
<feature type="strand" evidence="5">
    <location>
        <begin position="186"/>
        <end position="197"/>
    </location>
</feature>
<feature type="helix" evidence="5">
    <location>
        <begin position="200"/>
        <end position="210"/>
    </location>
</feature>
<feature type="strand" evidence="5">
    <location>
        <begin position="211"/>
        <end position="221"/>
    </location>
</feature>
<feature type="strand" evidence="5">
    <location>
        <begin position="224"/>
        <end position="229"/>
    </location>
</feature>
<feature type="helix" evidence="5">
    <location>
        <begin position="230"/>
        <end position="232"/>
    </location>
</feature>
<feature type="strand" evidence="5">
    <location>
        <begin position="237"/>
        <end position="239"/>
    </location>
</feature>
<feature type="strand" evidence="5">
    <location>
        <begin position="252"/>
        <end position="255"/>
    </location>
</feature>
<feature type="strand" evidence="5">
    <location>
        <begin position="269"/>
        <end position="271"/>
    </location>
</feature>
<feature type="strand" evidence="5">
    <location>
        <begin position="274"/>
        <end position="286"/>
    </location>
</feature>
<feature type="helix" evidence="5">
    <location>
        <begin position="313"/>
        <end position="315"/>
    </location>
</feature>
<feature type="strand" evidence="5">
    <location>
        <begin position="318"/>
        <end position="320"/>
    </location>
</feature>
<feature type="strand" evidence="5">
    <location>
        <begin position="324"/>
        <end position="328"/>
    </location>
</feature>
<feature type="turn" evidence="5">
    <location>
        <begin position="336"/>
        <end position="338"/>
    </location>
</feature>
<feature type="strand" evidence="5">
    <location>
        <begin position="347"/>
        <end position="352"/>
    </location>
</feature>
<feature type="strand" evidence="5">
    <location>
        <begin position="355"/>
        <end position="360"/>
    </location>
</feature>
<feature type="helix" evidence="5">
    <location>
        <begin position="364"/>
        <end position="366"/>
    </location>
</feature>
<feature type="strand" evidence="5">
    <location>
        <begin position="370"/>
        <end position="383"/>
    </location>
</feature>
<feature type="strand" evidence="5">
    <location>
        <begin position="388"/>
        <end position="393"/>
    </location>
</feature>
<feature type="turn" evidence="5">
    <location>
        <begin position="394"/>
        <end position="397"/>
    </location>
</feature>
<feature type="strand" evidence="5">
    <location>
        <begin position="398"/>
        <end position="405"/>
    </location>
</feature>
<feature type="helix" evidence="5">
    <location>
        <begin position="409"/>
        <end position="411"/>
    </location>
</feature>
<feature type="helix" evidence="5">
    <location>
        <begin position="417"/>
        <end position="433"/>
    </location>
</feature>
<feature type="turn" evidence="5">
    <location>
        <begin position="435"/>
        <end position="437"/>
    </location>
</feature>
<feature type="strand" evidence="5">
    <location>
        <begin position="438"/>
        <end position="440"/>
    </location>
</feature>
<feature type="strand" evidence="5">
    <location>
        <begin position="445"/>
        <end position="448"/>
    </location>
</feature>
<feature type="strand" evidence="5">
    <location>
        <begin position="454"/>
        <end position="462"/>
    </location>
</feature>
<feature type="helix" evidence="5">
    <location>
        <begin position="513"/>
        <end position="553"/>
    </location>
</feature>
<feature type="turn" evidence="5">
    <location>
        <begin position="554"/>
        <end position="556"/>
    </location>
</feature>
<feature type="helix" evidence="5">
    <location>
        <begin position="558"/>
        <end position="565"/>
    </location>
</feature>
<feature type="strand" evidence="5">
    <location>
        <begin position="576"/>
        <end position="580"/>
    </location>
</feature>
<feature type="strand" evidence="5">
    <location>
        <begin position="589"/>
        <end position="598"/>
    </location>
</feature>
<feature type="strand" evidence="5">
    <location>
        <begin position="605"/>
        <end position="611"/>
    </location>
</feature>
<feature type="strand" evidence="5">
    <location>
        <begin position="613"/>
        <end position="621"/>
    </location>
</feature>
<feature type="strand" evidence="5">
    <location>
        <begin position="624"/>
        <end position="629"/>
    </location>
</feature>
<feature type="strand" evidence="5">
    <location>
        <begin position="631"/>
        <end position="638"/>
    </location>
</feature>
<feature type="strand" evidence="5">
    <location>
        <begin position="642"/>
        <end position="644"/>
    </location>
</feature>
<feature type="strand" evidence="5">
    <location>
        <begin position="650"/>
        <end position="655"/>
    </location>
</feature>
<feature type="strand" evidence="5">
    <location>
        <begin position="658"/>
        <end position="672"/>
    </location>
</feature>
<feature type="helix" evidence="5">
    <location>
        <begin position="673"/>
        <end position="675"/>
    </location>
</feature>
<feature type="strand" evidence="5">
    <location>
        <begin position="676"/>
        <end position="679"/>
    </location>
</feature>
<feature type="helix" evidence="5">
    <location>
        <begin position="703"/>
        <end position="706"/>
    </location>
</feature>
<feature type="helix" evidence="5">
    <location>
        <begin position="714"/>
        <end position="721"/>
    </location>
</feature>
<feature type="helix" evidence="5">
    <location>
        <begin position="724"/>
        <end position="728"/>
    </location>
</feature>
<gene>
    <name evidence="2" type="primary">gB</name>
    <name type="ORF">ORF31</name>
</gene>
<organismHost>
    <name type="scientific">Homo sapiens</name>
    <name type="common">Human</name>
    <dbReference type="NCBI Taxonomy" id="9606"/>
</organismHost>
<evidence type="ECO:0000255" key="1"/>
<evidence type="ECO:0000255" key="2">
    <source>
        <dbReference type="HAMAP-Rule" id="MF_04032"/>
    </source>
</evidence>
<evidence type="ECO:0000269" key="3">
    <source>
    </source>
</evidence>
<evidence type="ECO:0000305" key="4"/>
<evidence type="ECO:0007829" key="5">
    <source>
        <dbReference type="PDB" id="6VN1"/>
    </source>
</evidence>
<comment type="function">
    <text evidence="2">Envelope glycoprotein that forms spikes at the surface of virion envelope. Essential for the initial attachment to heparan sulfate moieties of the host cell surface proteoglycans. Involved in fusion of viral and cellular membranes leading to virus entry into the host cell. Following initial binding to its host receptors, membrane fusion is mediated by the fusion machinery composed at least of gB and the heterodimer gH/gL. May be involved in the fusion between the virion envelope and the outer nuclear membrane during virion egress.</text>
</comment>
<comment type="subunit">
    <text evidence="2 3">Homotrimer; disulfide-linked. Binds to heparan sulfate proteoglycans. Interacts with gH/gL heterodimer (By similarity). Interacts with gE.</text>
</comment>
<comment type="subcellular location">
    <subcellularLocation>
        <location evidence="2 3">Virion membrane</location>
        <topology evidence="2 3">Single-pass type I membrane protein</topology>
    </subcellularLocation>
    <subcellularLocation>
        <location evidence="2 3">Host cell membrane</location>
        <topology evidence="2 3">Single-pass type I membrane protein</topology>
    </subcellularLocation>
    <subcellularLocation>
        <location evidence="2 3">Host endosome membrane</location>
        <topology evidence="2 3">Single-pass type I membrane protein</topology>
    </subcellularLocation>
    <subcellularLocation>
        <location evidence="2">Host Golgi apparatus membrane</location>
        <topology evidence="2 3">Single-pass type I membrane protein</topology>
    </subcellularLocation>
    <text evidence="2">During virion morphogenesis, this protein probably accumulates in the endosomes and trans-Golgi where secondary envelopment occurs. It is probably transported to the cell surface from where it is endocytosed and directed to the trans-Golgi network (TGN).</text>
</comment>
<comment type="PTM">
    <text>A proteolytic cleavage by host furin generates two subunits that remain linked by disulfide bonds.</text>
</comment>
<comment type="similarity">
    <text evidence="2">Belongs to the herpesviridae glycoprotein B family.</text>
</comment>
<comment type="sequence caution" evidence="4">
    <conflict type="erroneous initiation">
        <sequence resource="EMBL-CDS" id="CAA27914"/>
    </conflict>
</comment>
<accession>P09257</accession>
<protein>
    <recommendedName>
        <fullName evidence="2">Envelope glycoprotein B</fullName>
        <shortName evidence="2">gB</shortName>
    </recommendedName>
</protein>